<organism>
    <name type="scientific">Streptococcus pneumoniae (strain ATCC BAA-255 / R6)</name>
    <dbReference type="NCBI Taxonomy" id="171101"/>
    <lineage>
        <taxon>Bacteria</taxon>
        <taxon>Bacillati</taxon>
        <taxon>Bacillota</taxon>
        <taxon>Bacilli</taxon>
        <taxon>Lactobacillales</taxon>
        <taxon>Streptococcaceae</taxon>
        <taxon>Streptococcus</taxon>
    </lineage>
</organism>
<comment type="function">
    <text evidence="1">DNA-dependent RNA polymerase catalyzes the transcription of DNA into RNA using the four ribonucleoside triphosphates as substrates.</text>
</comment>
<comment type="catalytic activity">
    <reaction evidence="1">
        <text>RNA(n) + a ribonucleoside 5'-triphosphate = RNA(n+1) + diphosphate</text>
        <dbReference type="Rhea" id="RHEA:21248"/>
        <dbReference type="Rhea" id="RHEA-COMP:14527"/>
        <dbReference type="Rhea" id="RHEA-COMP:17342"/>
        <dbReference type="ChEBI" id="CHEBI:33019"/>
        <dbReference type="ChEBI" id="CHEBI:61557"/>
        <dbReference type="ChEBI" id="CHEBI:140395"/>
        <dbReference type="EC" id="2.7.7.6"/>
    </reaction>
</comment>
<comment type="cofactor">
    <cofactor evidence="1">
        <name>Mg(2+)</name>
        <dbReference type="ChEBI" id="CHEBI:18420"/>
    </cofactor>
    <text evidence="1">Binds 1 Mg(2+) ion per subunit.</text>
</comment>
<comment type="cofactor">
    <cofactor evidence="1">
        <name>Zn(2+)</name>
        <dbReference type="ChEBI" id="CHEBI:29105"/>
    </cofactor>
    <text evidence="1">Binds 2 Zn(2+) ions per subunit.</text>
</comment>
<comment type="subunit">
    <text evidence="1">The RNAP catalytic core consists of 2 alpha, 1 beta, 1 beta' and 1 omega subunit. When a sigma factor is associated with the core the holoenzyme is formed, which can initiate transcription.</text>
</comment>
<comment type="similarity">
    <text evidence="1">Belongs to the RNA polymerase beta' chain family.</text>
</comment>
<sequence length="1225" mass="136964">MVDVNRFKSMQITLASPSKVRSWSYGEVKKPETINYRTLKPEREGLFDEVIFGPTKDWECACGKYKRIRYRGIVCDRCGVEVTRTKVRRERMGHIELKAPVSHIWYFKGIPSRMGLTLDMSPRALEEVIYFAAYVVIDPKDTPLEHKSIMTEREYRERLREYGYGSFVAKMGAEAIQDLLKQVDLEKEIAELKEELKTATGQKRVKAIRRLDVLDAFYKSGNKPEWMILNILPVIPPDLRPMLQLDGGRFASSDLNDLYRRVINRNNRLARLLELNAPGIIVQNEKRMLQEAVDALIDNGRRGRPITGPGSRPLKSLSHMLKGKQGRFRQNLLGKRVDFSGRSVIAVGPTLKMYQCGVPREMAIELFKPFVMREIVARDIVQNVKAAKRLVERGDERIWDILEEVIKEHPVLLNRAPTLHRLGIQAFEPVLIDGKALRLHPLVCEAYNADFDGDQMAIHVPLSEEAQAEARILMLAAEHILNPKDGKPVVTPSQDMVLGNYYLTMEEAGREGEGMVFKDRDEAVMAYRNGYVHLHSRVGIATDSLNKPWTEEQRHKVLLTTVGKILFNDIMPEGLPYLQEPNNANLTEGVPAKYFLPLGGAIKEAISNLELNPPFKKKNLGNIIAEIFKRFRTTETSALLDRMKNLGYHHSTLAGLTVGIADIPVVDDKAEIIEESHKRVEQITKQFRRGMITDDERYNAVTAEWRAAREKLEKRLIANQDPKNPIVMMMDSGARGNISNFSQLAGMRGLMAAPNGRIMELPILSNFREGLSVLEMFFSTHGARKGMTDTALKTADSGYLTRRLVDVAQDVIIREDDCGTDRGLLIRSIAEGKEMIESLEERLNGRYTKKTVKHPETGAVIIGPNELITEDKAREIVNAGVEEVTIRSVFTCNTRRGVCRHCYGINLATGDAVEVGEAVGTIAAQSIGEPGTQLTMRTFHTGGVASNTDITQGLPRVQEIFEARNPKGEAVITEVKGQVTAIEEDASTRTKKVFVKGETGEGEYVVPFTARMRVEVGGQVARGAALTEGSIQPKRLLAVRDVLSVETYLLGEVQKVYRSQGVEIGDKHIEVMVRQMIRKVRVMDPGDTDLLMGTLMDINDFTDANKDVLIAGGVPATGRPVLMGITKASLETNSFLSAASFQETTRVLTDAAIRGKKDHLLGLKENVIIGKIIPAGTGMARYRNLEPHAVNEEEYLNPPVEEEGNEETTEVVVDTAVETVEETVE</sequence>
<accession>Q8DNF1</accession>
<feature type="chain" id="PRO_0000067809" description="DNA-directed RNA polymerase subunit beta'">
    <location>
        <begin position="1"/>
        <end position="1225"/>
    </location>
</feature>
<feature type="binding site" evidence="1">
    <location>
        <position position="60"/>
    </location>
    <ligand>
        <name>Zn(2+)</name>
        <dbReference type="ChEBI" id="CHEBI:29105"/>
        <label>1</label>
    </ligand>
</feature>
<feature type="binding site" evidence="1">
    <location>
        <position position="62"/>
    </location>
    <ligand>
        <name>Zn(2+)</name>
        <dbReference type="ChEBI" id="CHEBI:29105"/>
        <label>1</label>
    </ligand>
</feature>
<feature type="binding site" evidence="1">
    <location>
        <position position="75"/>
    </location>
    <ligand>
        <name>Zn(2+)</name>
        <dbReference type="ChEBI" id="CHEBI:29105"/>
        <label>1</label>
    </ligand>
</feature>
<feature type="binding site" evidence="1">
    <location>
        <position position="78"/>
    </location>
    <ligand>
        <name>Zn(2+)</name>
        <dbReference type="ChEBI" id="CHEBI:29105"/>
        <label>1</label>
    </ligand>
</feature>
<feature type="binding site" evidence="1">
    <location>
        <position position="450"/>
    </location>
    <ligand>
        <name>Mg(2+)</name>
        <dbReference type="ChEBI" id="CHEBI:18420"/>
    </ligand>
</feature>
<feature type="binding site" evidence="1">
    <location>
        <position position="452"/>
    </location>
    <ligand>
        <name>Mg(2+)</name>
        <dbReference type="ChEBI" id="CHEBI:18420"/>
    </ligand>
</feature>
<feature type="binding site" evidence="1">
    <location>
        <position position="454"/>
    </location>
    <ligand>
        <name>Mg(2+)</name>
        <dbReference type="ChEBI" id="CHEBI:18420"/>
    </ligand>
</feature>
<feature type="binding site" evidence="1">
    <location>
        <position position="818"/>
    </location>
    <ligand>
        <name>Zn(2+)</name>
        <dbReference type="ChEBI" id="CHEBI:29105"/>
        <label>2</label>
    </ligand>
</feature>
<feature type="binding site" evidence="1">
    <location>
        <position position="892"/>
    </location>
    <ligand>
        <name>Zn(2+)</name>
        <dbReference type="ChEBI" id="CHEBI:29105"/>
        <label>2</label>
    </ligand>
</feature>
<feature type="binding site" evidence="1">
    <location>
        <position position="899"/>
    </location>
    <ligand>
        <name>Zn(2+)</name>
        <dbReference type="ChEBI" id="CHEBI:29105"/>
        <label>2</label>
    </ligand>
</feature>
<feature type="binding site" evidence="1">
    <location>
        <position position="902"/>
    </location>
    <ligand>
        <name>Zn(2+)</name>
        <dbReference type="ChEBI" id="CHEBI:29105"/>
        <label>2</label>
    </ligand>
</feature>
<dbReference type="EC" id="2.7.7.6" evidence="1"/>
<dbReference type="EMBL" id="AE007317">
    <property type="protein sequence ID" value="AAL00579.1"/>
    <property type="molecule type" value="Genomic_DNA"/>
</dbReference>
<dbReference type="PIR" id="F98093">
    <property type="entry name" value="F98093"/>
</dbReference>
<dbReference type="RefSeq" id="NP_359368.1">
    <property type="nucleotide sequence ID" value="NC_003098.1"/>
</dbReference>
<dbReference type="RefSeq" id="WP_000228757.1">
    <property type="nucleotide sequence ID" value="NC_003098.1"/>
</dbReference>
<dbReference type="SMR" id="Q8DNF1"/>
<dbReference type="STRING" id="171101.spr1776"/>
<dbReference type="KEGG" id="spr:spr1776"/>
<dbReference type="PATRIC" id="fig|171101.6.peg.1917"/>
<dbReference type="eggNOG" id="COG0086">
    <property type="taxonomic scope" value="Bacteria"/>
</dbReference>
<dbReference type="HOGENOM" id="CLU_000524_3_1_9"/>
<dbReference type="Proteomes" id="UP000000586">
    <property type="component" value="Chromosome"/>
</dbReference>
<dbReference type="GO" id="GO:0000428">
    <property type="term" value="C:DNA-directed RNA polymerase complex"/>
    <property type="evidence" value="ECO:0007669"/>
    <property type="project" value="UniProtKB-KW"/>
</dbReference>
<dbReference type="GO" id="GO:0003677">
    <property type="term" value="F:DNA binding"/>
    <property type="evidence" value="ECO:0007669"/>
    <property type="project" value="UniProtKB-UniRule"/>
</dbReference>
<dbReference type="GO" id="GO:0003899">
    <property type="term" value="F:DNA-directed RNA polymerase activity"/>
    <property type="evidence" value="ECO:0007669"/>
    <property type="project" value="UniProtKB-UniRule"/>
</dbReference>
<dbReference type="GO" id="GO:0000287">
    <property type="term" value="F:magnesium ion binding"/>
    <property type="evidence" value="ECO:0007669"/>
    <property type="project" value="UniProtKB-UniRule"/>
</dbReference>
<dbReference type="GO" id="GO:0008270">
    <property type="term" value="F:zinc ion binding"/>
    <property type="evidence" value="ECO:0007669"/>
    <property type="project" value="UniProtKB-UniRule"/>
</dbReference>
<dbReference type="GO" id="GO:0006351">
    <property type="term" value="P:DNA-templated transcription"/>
    <property type="evidence" value="ECO:0007669"/>
    <property type="project" value="UniProtKB-UniRule"/>
</dbReference>
<dbReference type="CDD" id="cd02655">
    <property type="entry name" value="RNAP_beta'_C"/>
    <property type="match status" value="1"/>
</dbReference>
<dbReference type="CDD" id="cd01609">
    <property type="entry name" value="RNAP_beta'_N"/>
    <property type="match status" value="1"/>
</dbReference>
<dbReference type="FunFam" id="1.10.150.390:FF:000002">
    <property type="entry name" value="DNA-directed RNA polymerase subunit beta"/>
    <property type="match status" value="1"/>
</dbReference>
<dbReference type="FunFam" id="4.10.860.120:FF:000001">
    <property type="entry name" value="DNA-directed RNA polymerase subunit beta"/>
    <property type="match status" value="1"/>
</dbReference>
<dbReference type="Gene3D" id="1.10.132.30">
    <property type="match status" value="1"/>
</dbReference>
<dbReference type="Gene3D" id="1.10.150.390">
    <property type="match status" value="1"/>
</dbReference>
<dbReference type="Gene3D" id="1.10.1790.20">
    <property type="match status" value="1"/>
</dbReference>
<dbReference type="Gene3D" id="1.10.40.90">
    <property type="match status" value="1"/>
</dbReference>
<dbReference type="Gene3D" id="2.40.40.20">
    <property type="match status" value="1"/>
</dbReference>
<dbReference type="Gene3D" id="2.40.50.100">
    <property type="match status" value="1"/>
</dbReference>
<dbReference type="Gene3D" id="4.10.860.120">
    <property type="entry name" value="RNA polymerase II, clamp domain"/>
    <property type="match status" value="1"/>
</dbReference>
<dbReference type="Gene3D" id="1.10.274.100">
    <property type="entry name" value="RNA polymerase Rpb1, domain 3"/>
    <property type="match status" value="1"/>
</dbReference>
<dbReference type="HAMAP" id="MF_01322">
    <property type="entry name" value="RNApol_bact_RpoC"/>
    <property type="match status" value="1"/>
</dbReference>
<dbReference type="InterPro" id="IPR045867">
    <property type="entry name" value="DNA-dir_RpoC_beta_prime"/>
</dbReference>
<dbReference type="InterPro" id="IPR012754">
    <property type="entry name" value="DNA-dir_RpoC_beta_prime_bact"/>
</dbReference>
<dbReference type="InterPro" id="IPR000722">
    <property type="entry name" value="RNA_pol_asu"/>
</dbReference>
<dbReference type="InterPro" id="IPR006592">
    <property type="entry name" value="RNA_pol_N"/>
</dbReference>
<dbReference type="InterPro" id="IPR007080">
    <property type="entry name" value="RNA_pol_Rpb1_1"/>
</dbReference>
<dbReference type="InterPro" id="IPR007066">
    <property type="entry name" value="RNA_pol_Rpb1_3"/>
</dbReference>
<dbReference type="InterPro" id="IPR042102">
    <property type="entry name" value="RNA_pol_Rpb1_3_sf"/>
</dbReference>
<dbReference type="InterPro" id="IPR007083">
    <property type="entry name" value="RNA_pol_Rpb1_4"/>
</dbReference>
<dbReference type="InterPro" id="IPR007081">
    <property type="entry name" value="RNA_pol_Rpb1_5"/>
</dbReference>
<dbReference type="InterPro" id="IPR044893">
    <property type="entry name" value="RNA_pol_Rpb1_clamp_domain"/>
</dbReference>
<dbReference type="InterPro" id="IPR038120">
    <property type="entry name" value="Rpb1_funnel_sf"/>
</dbReference>
<dbReference type="NCBIfam" id="TIGR02386">
    <property type="entry name" value="rpoC_TIGR"/>
    <property type="match status" value="1"/>
</dbReference>
<dbReference type="PANTHER" id="PTHR19376">
    <property type="entry name" value="DNA-DIRECTED RNA POLYMERASE"/>
    <property type="match status" value="1"/>
</dbReference>
<dbReference type="PANTHER" id="PTHR19376:SF54">
    <property type="entry name" value="DNA-DIRECTED RNA POLYMERASE SUBUNIT BETA"/>
    <property type="match status" value="1"/>
</dbReference>
<dbReference type="Pfam" id="PF04997">
    <property type="entry name" value="RNA_pol_Rpb1_1"/>
    <property type="match status" value="1"/>
</dbReference>
<dbReference type="Pfam" id="PF00623">
    <property type="entry name" value="RNA_pol_Rpb1_2"/>
    <property type="match status" value="2"/>
</dbReference>
<dbReference type="Pfam" id="PF04983">
    <property type="entry name" value="RNA_pol_Rpb1_3"/>
    <property type="match status" value="1"/>
</dbReference>
<dbReference type="Pfam" id="PF05000">
    <property type="entry name" value="RNA_pol_Rpb1_4"/>
    <property type="match status" value="1"/>
</dbReference>
<dbReference type="Pfam" id="PF04998">
    <property type="entry name" value="RNA_pol_Rpb1_5"/>
    <property type="match status" value="1"/>
</dbReference>
<dbReference type="SMART" id="SM00663">
    <property type="entry name" value="RPOLA_N"/>
    <property type="match status" value="1"/>
</dbReference>
<dbReference type="SUPFAM" id="SSF64484">
    <property type="entry name" value="beta and beta-prime subunits of DNA dependent RNA-polymerase"/>
    <property type="match status" value="1"/>
</dbReference>
<proteinExistence type="inferred from homology"/>
<keyword id="KW-0240">DNA-directed RNA polymerase</keyword>
<keyword id="KW-0460">Magnesium</keyword>
<keyword id="KW-0479">Metal-binding</keyword>
<keyword id="KW-0548">Nucleotidyltransferase</keyword>
<keyword id="KW-1185">Reference proteome</keyword>
<keyword id="KW-0804">Transcription</keyword>
<keyword id="KW-0808">Transferase</keyword>
<keyword id="KW-0862">Zinc</keyword>
<protein>
    <recommendedName>
        <fullName evidence="1">DNA-directed RNA polymerase subunit beta'</fullName>
        <shortName evidence="1">RNAP subunit beta'</shortName>
        <ecNumber evidence="1">2.7.7.6</ecNumber>
    </recommendedName>
    <alternativeName>
        <fullName evidence="1">RNA polymerase subunit beta'</fullName>
    </alternativeName>
    <alternativeName>
        <fullName evidence="1">Transcriptase subunit beta'</fullName>
    </alternativeName>
</protein>
<evidence type="ECO:0000255" key="1">
    <source>
        <dbReference type="HAMAP-Rule" id="MF_01322"/>
    </source>
</evidence>
<name>RPOC_STRR6</name>
<reference key="1">
    <citation type="journal article" date="2001" name="J. Bacteriol.">
        <title>Genome of the bacterium Streptococcus pneumoniae strain R6.</title>
        <authorList>
            <person name="Hoskins J."/>
            <person name="Alborn W.E. Jr."/>
            <person name="Arnold J."/>
            <person name="Blaszczak L.C."/>
            <person name="Burgett S."/>
            <person name="DeHoff B.S."/>
            <person name="Estrem S.T."/>
            <person name="Fritz L."/>
            <person name="Fu D.-J."/>
            <person name="Fuller W."/>
            <person name="Geringer C."/>
            <person name="Gilmour R."/>
            <person name="Glass J.S."/>
            <person name="Khoja H."/>
            <person name="Kraft A.R."/>
            <person name="Lagace R.E."/>
            <person name="LeBlanc D.J."/>
            <person name="Lee L.N."/>
            <person name="Lefkowitz E.J."/>
            <person name="Lu J."/>
            <person name="Matsushima P."/>
            <person name="McAhren S.M."/>
            <person name="McHenney M."/>
            <person name="McLeaster K."/>
            <person name="Mundy C.W."/>
            <person name="Nicas T.I."/>
            <person name="Norris F.H."/>
            <person name="O'Gara M."/>
            <person name="Peery R.B."/>
            <person name="Robertson G.T."/>
            <person name="Rockey P."/>
            <person name="Sun P.-M."/>
            <person name="Winkler M.E."/>
            <person name="Yang Y."/>
            <person name="Young-Bellido M."/>
            <person name="Zhao G."/>
            <person name="Zook C.A."/>
            <person name="Baltz R.H."/>
            <person name="Jaskunas S.R."/>
            <person name="Rosteck P.R. Jr."/>
            <person name="Skatrud P.L."/>
            <person name="Glass J.I."/>
        </authorList>
    </citation>
    <scope>NUCLEOTIDE SEQUENCE [LARGE SCALE GENOMIC DNA]</scope>
    <source>
        <strain>ATCC BAA-255 / R6</strain>
    </source>
</reference>
<gene>
    <name evidence="1" type="primary">rpoC</name>
    <name type="ordered locus">spr1776</name>
</gene>